<reference key="1">
    <citation type="journal article" date="2008" name="DNA Res.">
        <title>Comparative genome analysis of Lactobacillus reuteri and Lactobacillus fermentum reveal a genomic island for reuterin and cobalamin production.</title>
        <authorList>
            <person name="Morita H."/>
            <person name="Toh H."/>
            <person name="Fukuda S."/>
            <person name="Horikawa H."/>
            <person name="Oshima K."/>
            <person name="Suzuki T."/>
            <person name="Murakami M."/>
            <person name="Hisamatsu S."/>
            <person name="Kato Y."/>
            <person name="Takizawa T."/>
            <person name="Fukuoka H."/>
            <person name="Yoshimura T."/>
            <person name="Itoh K."/>
            <person name="O'Sullivan D.J."/>
            <person name="McKay L.L."/>
            <person name="Ohno H."/>
            <person name="Kikuchi J."/>
            <person name="Masaoka T."/>
            <person name="Hattori M."/>
        </authorList>
    </citation>
    <scope>NUCLEOTIDE SEQUENCE [LARGE SCALE GENOMIC DNA]</scope>
    <source>
        <strain>NBRC 3956 / LMG 18251</strain>
    </source>
</reference>
<gene>
    <name evidence="1" type="primary">der</name>
    <name type="synonym">engA</name>
    <name type="ordered locus">LAF_0881</name>
</gene>
<keyword id="KW-0342">GTP-binding</keyword>
<keyword id="KW-0547">Nucleotide-binding</keyword>
<keyword id="KW-1185">Reference proteome</keyword>
<keyword id="KW-0677">Repeat</keyword>
<keyword id="KW-0690">Ribosome biogenesis</keyword>
<feature type="chain" id="PRO_1000099133" description="GTPase Der">
    <location>
        <begin position="1"/>
        <end position="437"/>
    </location>
</feature>
<feature type="domain" description="EngA-type G 1">
    <location>
        <begin position="4"/>
        <end position="167"/>
    </location>
</feature>
<feature type="domain" description="EngA-type G 2">
    <location>
        <begin position="175"/>
        <end position="352"/>
    </location>
</feature>
<feature type="domain" description="KH-like" evidence="1">
    <location>
        <begin position="353"/>
        <end position="437"/>
    </location>
</feature>
<feature type="binding site" evidence="1">
    <location>
        <begin position="10"/>
        <end position="17"/>
    </location>
    <ligand>
        <name>GTP</name>
        <dbReference type="ChEBI" id="CHEBI:37565"/>
        <label>1</label>
    </ligand>
</feature>
<feature type="binding site" evidence="1">
    <location>
        <begin position="57"/>
        <end position="61"/>
    </location>
    <ligand>
        <name>GTP</name>
        <dbReference type="ChEBI" id="CHEBI:37565"/>
        <label>1</label>
    </ligand>
</feature>
<feature type="binding site" evidence="1">
    <location>
        <begin position="119"/>
        <end position="122"/>
    </location>
    <ligand>
        <name>GTP</name>
        <dbReference type="ChEBI" id="CHEBI:37565"/>
        <label>1</label>
    </ligand>
</feature>
<feature type="binding site" evidence="1">
    <location>
        <begin position="181"/>
        <end position="188"/>
    </location>
    <ligand>
        <name>GTP</name>
        <dbReference type="ChEBI" id="CHEBI:37565"/>
        <label>2</label>
    </ligand>
</feature>
<feature type="binding site" evidence="1">
    <location>
        <begin position="229"/>
        <end position="233"/>
    </location>
    <ligand>
        <name>GTP</name>
        <dbReference type="ChEBI" id="CHEBI:37565"/>
        <label>2</label>
    </ligand>
</feature>
<feature type="binding site" evidence="1">
    <location>
        <begin position="294"/>
        <end position="297"/>
    </location>
    <ligand>
        <name>GTP</name>
        <dbReference type="ChEBI" id="CHEBI:37565"/>
        <label>2</label>
    </ligand>
</feature>
<dbReference type="EMBL" id="AP008937">
    <property type="protein sequence ID" value="BAG27217.1"/>
    <property type="molecule type" value="Genomic_DNA"/>
</dbReference>
<dbReference type="RefSeq" id="WP_012391194.1">
    <property type="nucleotide sequence ID" value="NC_010610.1"/>
</dbReference>
<dbReference type="SMR" id="B2GC35"/>
<dbReference type="KEGG" id="lfe:LAF_0881"/>
<dbReference type="PATRIC" id="fig|334390.5.peg.967"/>
<dbReference type="eggNOG" id="COG1160">
    <property type="taxonomic scope" value="Bacteria"/>
</dbReference>
<dbReference type="HOGENOM" id="CLU_016077_6_2_9"/>
<dbReference type="Proteomes" id="UP000001697">
    <property type="component" value="Chromosome"/>
</dbReference>
<dbReference type="GO" id="GO:0005525">
    <property type="term" value="F:GTP binding"/>
    <property type="evidence" value="ECO:0007669"/>
    <property type="project" value="UniProtKB-UniRule"/>
</dbReference>
<dbReference type="GO" id="GO:0043022">
    <property type="term" value="F:ribosome binding"/>
    <property type="evidence" value="ECO:0007669"/>
    <property type="project" value="TreeGrafter"/>
</dbReference>
<dbReference type="GO" id="GO:0042254">
    <property type="term" value="P:ribosome biogenesis"/>
    <property type="evidence" value="ECO:0007669"/>
    <property type="project" value="UniProtKB-KW"/>
</dbReference>
<dbReference type="CDD" id="cd01894">
    <property type="entry name" value="EngA1"/>
    <property type="match status" value="1"/>
</dbReference>
<dbReference type="CDD" id="cd01895">
    <property type="entry name" value="EngA2"/>
    <property type="match status" value="1"/>
</dbReference>
<dbReference type="FunFam" id="3.30.300.20:FF:000004">
    <property type="entry name" value="GTPase Der"/>
    <property type="match status" value="1"/>
</dbReference>
<dbReference type="FunFam" id="3.40.50.300:FF:000040">
    <property type="entry name" value="GTPase Der"/>
    <property type="match status" value="1"/>
</dbReference>
<dbReference type="FunFam" id="3.40.50.300:FF:000057">
    <property type="entry name" value="GTPase Der"/>
    <property type="match status" value="1"/>
</dbReference>
<dbReference type="Gene3D" id="3.30.300.20">
    <property type="match status" value="1"/>
</dbReference>
<dbReference type="Gene3D" id="3.40.50.300">
    <property type="entry name" value="P-loop containing nucleotide triphosphate hydrolases"/>
    <property type="match status" value="2"/>
</dbReference>
<dbReference type="HAMAP" id="MF_00195">
    <property type="entry name" value="GTPase_Der"/>
    <property type="match status" value="1"/>
</dbReference>
<dbReference type="InterPro" id="IPR031166">
    <property type="entry name" value="G_ENGA"/>
</dbReference>
<dbReference type="InterPro" id="IPR006073">
    <property type="entry name" value="GTP-bd"/>
</dbReference>
<dbReference type="InterPro" id="IPR016484">
    <property type="entry name" value="GTPase_Der"/>
</dbReference>
<dbReference type="InterPro" id="IPR032859">
    <property type="entry name" value="KH_dom-like"/>
</dbReference>
<dbReference type="InterPro" id="IPR015946">
    <property type="entry name" value="KH_dom-like_a/b"/>
</dbReference>
<dbReference type="InterPro" id="IPR027417">
    <property type="entry name" value="P-loop_NTPase"/>
</dbReference>
<dbReference type="InterPro" id="IPR005225">
    <property type="entry name" value="Small_GTP-bd"/>
</dbReference>
<dbReference type="NCBIfam" id="TIGR03594">
    <property type="entry name" value="GTPase_EngA"/>
    <property type="match status" value="1"/>
</dbReference>
<dbReference type="NCBIfam" id="TIGR00231">
    <property type="entry name" value="small_GTP"/>
    <property type="match status" value="2"/>
</dbReference>
<dbReference type="PANTHER" id="PTHR43834">
    <property type="entry name" value="GTPASE DER"/>
    <property type="match status" value="1"/>
</dbReference>
<dbReference type="PANTHER" id="PTHR43834:SF6">
    <property type="entry name" value="GTPASE DER"/>
    <property type="match status" value="1"/>
</dbReference>
<dbReference type="Pfam" id="PF14714">
    <property type="entry name" value="KH_dom-like"/>
    <property type="match status" value="1"/>
</dbReference>
<dbReference type="Pfam" id="PF01926">
    <property type="entry name" value="MMR_HSR1"/>
    <property type="match status" value="2"/>
</dbReference>
<dbReference type="PIRSF" id="PIRSF006485">
    <property type="entry name" value="GTP-binding_EngA"/>
    <property type="match status" value="1"/>
</dbReference>
<dbReference type="PRINTS" id="PR00326">
    <property type="entry name" value="GTP1OBG"/>
</dbReference>
<dbReference type="SUPFAM" id="SSF52540">
    <property type="entry name" value="P-loop containing nucleoside triphosphate hydrolases"/>
    <property type="match status" value="2"/>
</dbReference>
<dbReference type="PROSITE" id="PS51712">
    <property type="entry name" value="G_ENGA"/>
    <property type="match status" value="2"/>
</dbReference>
<organism>
    <name type="scientific">Limosilactobacillus fermentum (strain NBRC 3956 / LMG 18251)</name>
    <name type="common">Lactobacillus fermentum</name>
    <dbReference type="NCBI Taxonomy" id="334390"/>
    <lineage>
        <taxon>Bacteria</taxon>
        <taxon>Bacillati</taxon>
        <taxon>Bacillota</taxon>
        <taxon>Bacilli</taxon>
        <taxon>Lactobacillales</taxon>
        <taxon>Lactobacillaceae</taxon>
        <taxon>Limosilactobacillus</taxon>
    </lineage>
</organism>
<protein>
    <recommendedName>
        <fullName evidence="1">GTPase Der</fullName>
    </recommendedName>
    <alternativeName>
        <fullName evidence="1">GTP-binding protein EngA</fullName>
    </alternativeName>
</protein>
<proteinExistence type="inferred from homology"/>
<name>DER_LIMF3</name>
<accession>B2GC35</accession>
<sequence length="437" mass="49218">MANPVVAIVGRPNVGKSTLFNRIAGERIAIVEDTPGVTRDRLYAHGEWLGKNFSMIDTGGIEMSDQPLLTQIRQQAEIAIEEADVIIMVVNVENGVTDADEQVAQILYRSNKPVVLAVNKVDNPERRLDVYDFYRLGLGEPYPVSSVHGVGLGDMLDAVIENFAEKDAEEEDDRIRFSFIGRPNVGKSSLVNAILGENRVIVSDMAGTTRDAINTQFTAKDGREFTMVDTAGIKKKGKLYENTERYALMRSMRAIDDSDVVLVVLNAEEGIRELDKHIAGYAHEAGRAVIIVVNKWDTIPDRDQRTMTDFTNLIRHEFQYLSYAPIVFVSAKTKQRLSRLPEMIEEAYDHQHRRIQSAVLNDVLMDALAANPTPSSNGRRLRVYYATQVAVAPPTFVIFVNDPDLMHFSYARYLENRIRAAFDFTGTPIRLIKRRRK</sequence>
<comment type="function">
    <text evidence="1">GTPase that plays an essential role in the late steps of ribosome biogenesis.</text>
</comment>
<comment type="subunit">
    <text evidence="1">Associates with the 50S ribosomal subunit.</text>
</comment>
<comment type="similarity">
    <text evidence="1">Belongs to the TRAFAC class TrmE-Era-EngA-EngB-Septin-like GTPase superfamily. EngA (Der) GTPase family.</text>
</comment>
<evidence type="ECO:0000255" key="1">
    <source>
        <dbReference type="HAMAP-Rule" id="MF_00195"/>
    </source>
</evidence>